<reference key="1">
    <citation type="submission" date="2007-08" db="EMBL/GenBank/DDBJ databases">
        <authorList>
            <consortium name="The Vibrio harveyi Genome Sequencing Project"/>
            <person name="Bassler B."/>
            <person name="Clifton S.W."/>
            <person name="Fulton L."/>
            <person name="Delehaunty K."/>
            <person name="Fronick C."/>
            <person name="Harrison M."/>
            <person name="Markivic C."/>
            <person name="Fulton R."/>
            <person name="Tin-Wollam A.-M."/>
            <person name="Shah N."/>
            <person name="Pepin K."/>
            <person name="Nash W."/>
            <person name="Thiruvilangam P."/>
            <person name="Bhonagiri V."/>
            <person name="Waters C."/>
            <person name="Tu K.C."/>
            <person name="Irgon J."/>
            <person name="Wilson R.K."/>
        </authorList>
    </citation>
    <scope>NUCLEOTIDE SEQUENCE [LARGE SCALE GENOMIC DNA]</scope>
    <source>
        <strain>ATCC BAA-1116 / BB120</strain>
    </source>
</reference>
<evidence type="ECO:0000255" key="1">
    <source>
        <dbReference type="HAMAP-Rule" id="MF_00780"/>
    </source>
</evidence>
<keyword id="KW-0574">Periplasm</keyword>
<keyword id="KW-0732">Signal</keyword>
<organism>
    <name type="scientific">Vibrio campbellii (strain ATCC BAA-1116)</name>
    <dbReference type="NCBI Taxonomy" id="2902295"/>
    <lineage>
        <taxon>Bacteria</taxon>
        <taxon>Pseudomonadati</taxon>
        <taxon>Pseudomonadota</taxon>
        <taxon>Gammaproteobacteria</taxon>
        <taxon>Vibrionales</taxon>
        <taxon>Vibrionaceae</taxon>
        <taxon>Vibrio</taxon>
    </lineage>
</organism>
<gene>
    <name type="ordered locus">VIBHAR_05924</name>
</gene>
<feature type="signal peptide" evidence="1">
    <location>
        <begin position="1"/>
        <end position="22"/>
    </location>
</feature>
<feature type="chain" id="PRO_1000046827" description="UPF0312 protein VIBHAR_05924">
    <location>
        <begin position="23"/>
        <end position="189"/>
    </location>
</feature>
<dbReference type="EMBL" id="CP000790">
    <property type="protein sequence ID" value="ABU73817.1"/>
    <property type="molecule type" value="Genomic_DNA"/>
</dbReference>
<dbReference type="RefSeq" id="WP_005530839.1">
    <property type="nucleotide sequence ID" value="NC_009784.1"/>
</dbReference>
<dbReference type="SMR" id="A7N8H5"/>
<dbReference type="KEGG" id="vha:VIBHAR_05924"/>
<dbReference type="PATRIC" id="fig|338187.25.peg.4370"/>
<dbReference type="Proteomes" id="UP000008152">
    <property type="component" value="Chromosome II"/>
</dbReference>
<dbReference type="GO" id="GO:0042597">
    <property type="term" value="C:periplasmic space"/>
    <property type="evidence" value="ECO:0007669"/>
    <property type="project" value="UniProtKB-SubCell"/>
</dbReference>
<dbReference type="Gene3D" id="2.40.128.110">
    <property type="entry name" value="Lipid/polyisoprenoid-binding, YceI-like"/>
    <property type="match status" value="1"/>
</dbReference>
<dbReference type="HAMAP" id="MF_00780">
    <property type="entry name" value="UPF0312"/>
    <property type="match status" value="1"/>
</dbReference>
<dbReference type="InterPro" id="IPR007372">
    <property type="entry name" value="Lipid/polyisoprenoid-bd_YceI"/>
</dbReference>
<dbReference type="InterPro" id="IPR036761">
    <property type="entry name" value="TTHA0802/YceI-like_sf"/>
</dbReference>
<dbReference type="InterPro" id="IPR023480">
    <property type="entry name" value="UPF0312/YceI"/>
</dbReference>
<dbReference type="NCBIfam" id="NF002994">
    <property type="entry name" value="PRK03757.1"/>
    <property type="match status" value="1"/>
</dbReference>
<dbReference type="PANTHER" id="PTHR34406">
    <property type="entry name" value="PROTEIN YCEI"/>
    <property type="match status" value="1"/>
</dbReference>
<dbReference type="PANTHER" id="PTHR34406:SF1">
    <property type="entry name" value="PROTEIN YCEI"/>
    <property type="match status" value="1"/>
</dbReference>
<dbReference type="Pfam" id="PF04264">
    <property type="entry name" value="YceI"/>
    <property type="match status" value="1"/>
</dbReference>
<dbReference type="SMART" id="SM00867">
    <property type="entry name" value="YceI"/>
    <property type="match status" value="1"/>
</dbReference>
<dbReference type="SUPFAM" id="SSF101874">
    <property type="entry name" value="YceI-like"/>
    <property type="match status" value="1"/>
</dbReference>
<proteinExistence type="inferred from homology"/>
<name>Y5924_VIBC1</name>
<sequence>MKKSLFATGLAIAIALPFGANAADYVIDTKGAHASINFKVSHLGYSFIKGRFNTFSGDFSFDEKNIADSKVNVVVDTTSLDSNHAERDKHIRSGDFIDAGKYSEATFNSTKVVDKGNGKLGVTGDLTLHGVTKPITIEAEFVGAGNDPWGGERAGFIGQTRLELADFEIPVMGSSSYVDMELHIEGVKK</sequence>
<comment type="subcellular location">
    <subcellularLocation>
        <location evidence="1">Periplasm</location>
    </subcellularLocation>
</comment>
<comment type="similarity">
    <text evidence="1">Belongs to the UPF0312 family. Type 1 subfamily.</text>
</comment>
<accession>A7N8H5</accession>
<protein>
    <recommendedName>
        <fullName evidence="1">UPF0312 protein VIBHAR_05924</fullName>
    </recommendedName>
</protein>